<sequence length="274" mass="31072">MGTLTVNQNKLQKRLRRLAGEAVADFNMIEDGDKVMVCLSGGKDSYTLLDVLLHLQKVAPIQFEIVAVNMDQKQPGFPEYVLPAYLKELGVEYHIVEKDTYSVVKELIPEGKTTCSLCSRLRRGTLYTFADEIGATKMALGHHRDDIVETFFLNMFFNGSLKAMPPKLRADDGRNVVIRPLAYCNEKDIQAYSDFKQFPIIPCNLCGSQENLQRQVVKEMLLDWERKTPGRTESIFRSLQNVIPSQLADRNLFDFASLKIDETAASRFVNVVNL</sequence>
<organism>
    <name type="scientific">Pseudomonas fluorescens (strain SBW25)</name>
    <dbReference type="NCBI Taxonomy" id="216595"/>
    <lineage>
        <taxon>Bacteria</taxon>
        <taxon>Pseudomonadati</taxon>
        <taxon>Pseudomonadota</taxon>
        <taxon>Gammaproteobacteria</taxon>
        <taxon>Pseudomonadales</taxon>
        <taxon>Pseudomonadaceae</taxon>
        <taxon>Pseudomonas</taxon>
    </lineage>
</organism>
<feature type="chain" id="PRO_1000216133" description="tRNA-cytidine(32) 2-sulfurtransferase">
    <location>
        <begin position="1"/>
        <end position="274"/>
    </location>
</feature>
<feature type="short sequence motif" description="PP-loop motif" evidence="1">
    <location>
        <begin position="40"/>
        <end position="45"/>
    </location>
</feature>
<feature type="binding site" evidence="1">
    <location>
        <position position="115"/>
    </location>
    <ligand>
        <name>[4Fe-4S] cluster</name>
        <dbReference type="ChEBI" id="CHEBI:49883"/>
    </ligand>
</feature>
<feature type="binding site" evidence="1">
    <location>
        <position position="118"/>
    </location>
    <ligand>
        <name>[4Fe-4S] cluster</name>
        <dbReference type="ChEBI" id="CHEBI:49883"/>
    </ligand>
</feature>
<feature type="binding site" evidence="1">
    <location>
        <position position="206"/>
    </location>
    <ligand>
        <name>[4Fe-4S] cluster</name>
        <dbReference type="ChEBI" id="CHEBI:49883"/>
    </ligand>
</feature>
<evidence type="ECO:0000255" key="1">
    <source>
        <dbReference type="HAMAP-Rule" id="MF_01850"/>
    </source>
</evidence>
<reference key="1">
    <citation type="journal article" date="2009" name="Genome Biol.">
        <title>Genomic and genetic analyses of diversity and plant interactions of Pseudomonas fluorescens.</title>
        <authorList>
            <person name="Silby M.W."/>
            <person name="Cerdeno-Tarraga A.M."/>
            <person name="Vernikos G.S."/>
            <person name="Giddens S.R."/>
            <person name="Jackson R.W."/>
            <person name="Preston G.M."/>
            <person name="Zhang X.-X."/>
            <person name="Moon C.D."/>
            <person name="Gehrig S.M."/>
            <person name="Godfrey S.A.C."/>
            <person name="Knight C.G."/>
            <person name="Malone J.G."/>
            <person name="Robinson Z."/>
            <person name="Spiers A.J."/>
            <person name="Harris S."/>
            <person name="Challis G.L."/>
            <person name="Yaxley A.M."/>
            <person name="Harris D."/>
            <person name="Seeger K."/>
            <person name="Murphy L."/>
            <person name="Rutter S."/>
            <person name="Squares R."/>
            <person name="Quail M.A."/>
            <person name="Saunders E."/>
            <person name="Mavromatis K."/>
            <person name="Brettin T.S."/>
            <person name="Bentley S.D."/>
            <person name="Hothersall J."/>
            <person name="Stephens E."/>
            <person name="Thomas C.M."/>
            <person name="Parkhill J."/>
            <person name="Levy S.B."/>
            <person name="Rainey P.B."/>
            <person name="Thomson N.R."/>
        </authorList>
    </citation>
    <scope>NUCLEOTIDE SEQUENCE [LARGE SCALE GENOMIC DNA]</scope>
    <source>
        <strain>SBW25</strain>
    </source>
</reference>
<accession>C3JY43</accession>
<gene>
    <name evidence="1" type="primary">ttcA</name>
    <name type="ordered locus">PFLU_3786</name>
</gene>
<dbReference type="EC" id="2.8.1.-" evidence="1"/>
<dbReference type="EMBL" id="AM181176">
    <property type="protein sequence ID" value="CAY50081.1"/>
    <property type="molecule type" value="Genomic_DNA"/>
</dbReference>
<dbReference type="RefSeq" id="WP_012724923.1">
    <property type="nucleotide sequence ID" value="NC_012660.1"/>
</dbReference>
<dbReference type="SMR" id="C3JY43"/>
<dbReference type="STRING" id="294.SRM1_04178"/>
<dbReference type="PATRIC" id="fig|216595.4.peg.3931"/>
<dbReference type="eggNOG" id="COG0037">
    <property type="taxonomic scope" value="Bacteria"/>
</dbReference>
<dbReference type="HOGENOM" id="CLU_026481_0_0_6"/>
<dbReference type="OrthoDB" id="9801054at2"/>
<dbReference type="GO" id="GO:0005737">
    <property type="term" value="C:cytoplasm"/>
    <property type="evidence" value="ECO:0007669"/>
    <property type="project" value="UniProtKB-SubCell"/>
</dbReference>
<dbReference type="GO" id="GO:0051539">
    <property type="term" value="F:4 iron, 4 sulfur cluster binding"/>
    <property type="evidence" value="ECO:0007669"/>
    <property type="project" value="UniProtKB-UniRule"/>
</dbReference>
<dbReference type="GO" id="GO:0005524">
    <property type="term" value="F:ATP binding"/>
    <property type="evidence" value="ECO:0007669"/>
    <property type="project" value="UniProtKB-UniRule"/>
</dbReference>
<dbReference type="GO" id="GO:0000287">
    <property type="term" value="F:magnesium ion binding"/>
    <property type="evidence" value="ECO:0007669"/>
    <property type="project" value="UniProtKB-UniRule"/>
</dbReference>
<dbReference type="GO" id="GO:0016783">
    <property type="term" value="F:sulfurtransferase activity"/>
    <property type="evidence" value="ECO:0007669"/>
    <property type="project" value="UniProtKB-UniRule"/>
</dbReference>
<dbReference type="GO" id="GO:0000049">
    <property type="term" value="F:tRNA binding"/>
    <property type="evidence" value="ECO:0007669"/>
    <property type="project" value="UniProtKB-KW"/>
</dbReference>
<dbReference type="GO" id="GO:0034227">
    <property type="term" value="P:tRNA thio-modification"/>
    <property type="evidence" value="ECO:0007669"/>
    <property type="project" value="UniProtKB-UniRule"/>
</dbReference>
<dbReference type="CDD" id="cd24138">
    <property type="entry name" value="TtcA-like"/>
    <property type="match status" value="1"/>
</dbReference>
<dbReference type="Gene3D" id="3.40.50.620">
    <property type="entry name" value="HUPs"/>
    <property type="match status" value="1"/>
</dbReference>
<dbReference type="HAMAP" id="MF_01850">
    <property type="entry name" value="TtcA"/>
    <property type="match status" value="1"/>
</dbReference>
<dbReference type="InterPro" id="IPR014729">
    <property type="entry name" value="Rossmann-like_a/b/a_fold"/>
</dbReference>
<dbReference type="InterPro" id="IPR011063">
    <property type="entry name" value="TilS/TtcA_N"/>
</dbReference>
<dbReference type="InterPro" id="IPR012089">
    <property type="entry name" value="tRNA_Cyd_32_2_STrfase"/>
</dbReference>
<dbReference type="InterPro" id="IPR035107">
    <property type="entry name" value="tRNA_thiolation_TtcA_Ctu1"/>
</dbReference>
<dbReference type="NCBIfam" id="NF007972">
    <property type="entry name" value="PRK10696.1"/>
    <property type="match status" value="1"/>
</dbReference>
<dbReference type="PANTHER" id="PTHR43686:SF1">
    <property type="entry name" value="AMINOTRAN_5 DOMAIN-CONTAINING PROTEIN"/>
    <property type="match status" value="1"/>
</dbReference>
<dbReference type="PANTHER" id="PTHR43686">
    <property type="entry name" value="SULFURTRANSFERASE-RELATED"/>
    <property type="match status" value="1"/>
</dbReference>
<dbReference type="Pfam" id="PF01171">
    <property type="entry name" value="ATP_bind_3"/>
    <property type="match status" value="1"/>
</dbReference>
<dbReference type="PIRSF" id="PIRSF004976">
    <property type="entry name" value="ATPase_YdaO"/>
    <property type="match status" value="1"/>
</dbReference>
<dbReference type="SUPFAM" id="SSF52402">
    <property type="entry name" value="Adenine nucleotide alpha hydrolases-like"/>
    <property type="match status" value="1"/>
</dbReference>
<name>TTCA_PSEFS</name>
<comment type="function">
    <text evidence="1">Catalyzes the ATP-dependent 2-thiolation of cytidine in position 32 of tRNA, to form 2-thiocytidine (s(2)C32). The sulfur atoms are provided by the cysteine/cysteine desulfurase (IscS) system.</text>
</comment>
<comment type="catalytic activity">
    <reaction evidence="1">
        <text>cytidine(32) in tRNA + S-sulfanyl-L-cysteinyl-[cysteine desulfurase] + AH2 + ATP = 2-thiocytidine(32) in tRNA + L-cysteinyl-[cysteine desulfurase] + A + AMP + diphosphate + H(+)</text>
        <dbReference type="Rhea" id="RHEA:57048"/>
        <dbReference type="Rhea" id="RHEA-COMP:10288"/>
        <dbReference type="Rhea" id="RHEA-COMP:12157"/>
        <dbReference type="Rhea" id="RHEA-COMP:12158"/>
        <dbReference type="Rhea" id="RHEA-COMP:14821"/>
        <dbReference type="ChEBI" id="CHEBI:13193"/>
        <dbReference type="ChEBI" id="CHEBI:15378"/>
        <dbReference type="ChEBI" id="CHEBI:17499"/>
        <dbReference type="ChEBI" id="CHEBI:29950"/>
        <dbReference type="ChEBI" id="CHEBI:30616"/>
        <dbReference type="ChEBI" id="CHEBI:33019"/>
        <dbReference type="ChEBI" id="CHEBI:61963"/>
        <dbReference type="ChEBI" id="CHEBI:82748"/>
        <dbReference type="ChEBI" id="CHEBI:141453"/>
        <dbReference type="ChEBI" id="CHEBI:456215"/>
    </reaction>
    <physiologicalReaction direction="left-to-right" evidence="1">
        <dbReference type="Rhea" id="RHEA:57049"/>
    </physiologicalReaction>
</comment>
<comment type="cofactor">
    <cofactor evidence="1">
        <name>Mg(2+)</name>
        <dbReference type="ChEBI" id="CHEBI:18420"/>
    </cofactor>
</comment>
<comment type="cofactor">
    <cofactor evidence="1">
        <name>[4Fe-4S] cluster</name>
        <dbReference type="ChEBI" id="CHEBI:49883"/>
    </cofactor>
    <text evidence="1">Binds 1 [4Fe-4S] cluster per subunit. The cluster is chelated by three Cys residues, the fourth Fe has a free coordination site that may bind a sulfur atom transferred from the persulfide of IscS.</text>
</comment>
<comment type="pathway">
    <text evidence="1">tRNA modification.</text>
</comment>
<comment type="subunit">
    <text evidence="1">Homodimer.</text>
</comment>
<comment type="subcellular location">
    <subcellularLocation>
        <location evidence="1">Cytoplasm</location>
    </subcellularLocation>
</comment>
<comment type="miscellaneous">
    <text evidence="1">The thiolation reaction likely consists of two steps: a first activation step by ATP to form an adenylated intermediate of the target base of tRNA, and a second nucleophilic substitution step of the sulfur (S) atom supplied by the hydrosulfide attached to the Fe-S cluster.</text>
</comment>
<comment type="similarity">
    <text evidence="1">Belongs to the TtcA family.</text>
</comment>
<proteinExistence type="inferred from homology"/>
<protein>
    <recommendedName>
        <fullName evidence="1">tRNA-cytidine(32) 2-sulfurtransferase</fullName>
        <ecNumber evidence="1">2.8.1.-</ecNumber>
    </recommendedName>
    <alternativeName>
        <fullName evidence="1">Two-thiocytidine biosynthesis protein A</fullName>
    </alternativeName>
    <alternativeName>
        <fullName evidence="1">tRNA 2-thiocytidine biosynthesis protein TtcA</fullName>
    </alternativeName>
</protein>
<keyword id="KW-0004">4Fe-4S</keyword>
<keyword id="KW-0067">ATP-binding</keyword>
<keyword id="KW-0963">Cytoplasm</keyword>
<keyword id="KW-0408">Iron</keyword>
<keyword id="KW-0411">Iron-sulfur</keyword>
<keyword id="KW-0460">Magnesium</keyword>
<keyword id="KW-0479">Metal-binding</keyword>
<keyword id="KW-0547">Nucleotide-binding</keyword>
<keyword id="KW-0694">RNA-binding</keyword>
<keyword id="KW-0808">Transferase</keyword>
<keyword id="KW-0819">tRNA processing</keyword>
<keyword id="KW-0820">tRNA-binding</keyword>